<gene>
    <name evidence="1" type="primary">miaB</name>
    <name type="ordered locus">Smal_1357</name>
</gene>
<keyword id="KW-0004">4Fe-4S</keyword>
<keyword id="KW-0963">Cytoplasm</keyword>
<keyword id="KW-0408">Iron</keyword>
<keyword id="KW-0411">Iron-sulfur</keyword>
<keyword id="KW-0479">Metal-binding</keyword>
<keyword id="KW-0949">S-adenosyl-L-methionine</keyword>
<keyword id="KW-0808">Transferase</keyword>
<keyword id="KW-0819">tRNA processing</keyword>
<proteinExistence type="inferred from homology"/>
<organism>
    <name type="scientific">Stenotrophomonas maltophilia (strain R551-3)</name>
    <dbReference type="NCBI Taxonomy" id="391008"/>
    <lineage>
        <taxon>Bacteria</taxon>
        <taxon>Pseudomonadati</taxon>
        <taxon>Pseudomonadota</taxon>
        <taxon>Gammaproteobacteria</taxon>
        <taxon>Lysobacterales</taxon>
        <taxon>Lysobacteraceae</taxon>
        <taxon>Stenotrophomonas</taxon>
        <taxon>Stenotrophomonas maltophilia group</taxon>
    </lineage>
</organism>
<name>MIAB_STRM5</name>
<accession>B4SQK7</accession>
<protein>
    <recommendedName>
        <fullName evidence="1">tRNA-2-methylthio-N(6)-dimethylallyladenosine synthase</fullName>
        <ecNumber evidence="1">2.8.4.3</ecNumber>
    </recommendedName>
    <alternativeName>
        <fullName evidence="1">(Dimethylallyl)adenosine tRNA methylthiotransferase MiaB</fullName>
    </alternativeName>
    <alternativeName>
        <fullName evidence="1">tRNA-i(6)A37 methylthiotransferase</fullName>
    </alternativeName>
</protein>
<evidence type="ECO:0000255" key="1">
    <source>
        <dbReference type="HAMAP-Rule" id="MF_01864"/>
    </source>
</evidence>
<evidence type="ECO:0000255" key="2">
    <source>
        <dbReference type="PROSITE-ProRule" id="PRU01266"/>
    </source>
</evidence>
<evidence type="ECO:0000256" key="3">
    <source>
        <dbReference type="SAM" id="MobiDB-lite"/>
    </source>
</evidence>
<dbReference type="EC" id="2.8.4.3" evidence="1"/>
<dbReference type="EMBL" id="CP001111">
    <property type="protein sequence ID" value="ACF51062.1"/>
    <property type="molecule type" value="Genomic_DNA"/>
</dbReference>
<dbReference type="RefSeq" id="WP_012510588.1">
    <property type="nucleotide sequence ID" value="NC_011071.1"/>
</dbReference>
<dbReference type="SMR" id="B4SQK7"/>
<dbReference type="STRING" id="391008.Smal_1357"/>
<dbReference type="KEGG" id="smt:Smal_1357"/>
<dbReference type="eggNOG" id="COG0621">
    <property type="taxonomic scope" value="Bacteria"/>
</dbReference>
<dbReference type="HOGENOM" id="CLU_018697_2_0_6"/>
<dbReference type="OrthoDB" id="9805215at2"/>
<dbReference type="Proteomes" id="UP000001867">
    <property type="component" value="Chromosome"/>
</dbReference>
<dbReference type="GO" id="GO:0005829">
    <property type="term" value="C:cytosol"/>
    <property type="evidence" value="ECO:0007669"/>
    <property type="project" value="TreeGrafter"/>
</dbReference>
<dbReference type="GO" id="GO:0051539">
    <property type="term" value="F:4 iron, 4 sulfur cluster binding"/>
    <property type="evidence" value="ECO:0007669"/>
    <property type="project" value="UniProtKB-UniRule"/>
</dbReference>
<dbReference type="GO" id="GO:0046872">
    <property type="term" value="F:metal ion binding"/>
    <property type="evidence" value="ECO:0007669"/>
    <property type="project" value="UniProtKB-KW"/>
</dbReference>
<dbReference type="GO" id="GO:0035597">
    <property type="term" value="F:N6-isopentenyladenosine methylthiotransferase activity"/>
    <property type="evidence" value="ECO:0007669"/>
    <property type="project" value="TreeGrafter"/>
</dbReference>
<dbReference type="CDD" id="cd01335">
    <property type="entry name" value="Radical_SAM"/>
    <property type="match status" value="1"/>
</dbReference>
<dbReference type="FunFam" id="3.40.50.12160:FF:000001">
    <property type="entry name" value="tRNA-2-methylthio-N(6)-dimethylallyladenosine synthase"/>
    <property type="match status" value="1"/>
</dbReference>
<dbReference type="FunFam" id="3.80.30.20:FF:000001">
    <property type="entry name" value="tRNA-2-methylthio-N(6)-dimethylallyladenosine synthase 2"/>
    <property type="match status" value="1"/>
</dbReference>
<dbReference type="Gene3D" id="3.40.50.12160">
    <property type="entry name" value="Methylthiotransferase, N-terminal domain"/>
    <property type="match status" value="1"/>
</dbReference>
<dbReference type="Gene3D" id="3.80.30.20">
    <property type="entry name" value="tm_1862 like domain"/>
    <property type="match status" value="1"/>
</dbReference>
<dbReference type="HAMAP" id="MF_01864">
    <property type="entry name" value="tRNA_metthiotr_MiaB"/>
    <property type="match status" value="1"/>
</dbReference>
<dbReference type="InterPro" id="IPR006638">
    <property type="entry name" value="Elp3/MiaA/NifB-like_rSAM"/>
</dbReference>
<dbReference type="InterPro" id="IPR005839">
    <property type="entry name" value="Methylthiotransferase"/>
</dbReference>
<dbReference type="InterPro" id="IPR020612">
    <property type="entry name" value="Methylthiotransferase_CS"/>
</dbReference>
<dbReference type="InterPro" id="IPR013848">
    <property type="entry name" value="Methylthiotransferase_N"/>
</dbReference>
<dbReference type="InterPro" id="IPR038135">
    <property type="entry name" value="Methylthiotransferase_N_sf"/>
</dbReference>
<dbReference type="InterPro" id="IPR006463">
    <property type="entry name" value="MiaB_methiolase"/>
</dbReference>
<dbReference type="InterPro" id="IPR007197">
    <property type="entry name" value="rSAM"/>
</dbReference>
<dbReference type="InterPro" id="IPR023404">
    <property type="entry name" value="rSAM_horseshoe"/>
</dbReference>
<dbReference type="InterPro" id="IPR002792">
    <property type="entry name" value="TRAM_dom"/>
</dbReference>
<dbReference type="NCBIfam" id="TIGR01574">
    <property type="entry name" value="miaB-methiolase"/>
    <property type="match status" value="1"/>
</dbReference>
<dbReference type="NCBIfam" id="TIGR00089">
    <property type="entry name" value="MiaB/RimO family radical SAM methylthiotransferase"/>
    <property type="match status" value="1"/>
</dbReference>
<dbReference type="PANTHER" id="PTHR43020">
    <property type="entry name" value="CDK5 REGULATORY SUBUNIT-ASSOCIATED PROTEIN 1"/>
    <property type="match status" value="1"/>
</dbReference>
<dbReference type="PANTHER" id="PTHR43020:SF2">
    <property type="entry name" value="MITOCHONDRIAL TRNA METHYLTHIOTRANSFERASE CDK5RAP1"/>
    <property type="match status" value="1"/>
</dbReference>
<dbReference type="Pfam" id="PF04055">
    <property type="entry name" value="Radical_SAM"/>
    <property type="match status" value="1"/>
</dbReference>
<dbReference type="Pfam" id="PF01938">
    <property type="entry name" value="TRAM"/>
    <property type="match status" value="1"/>
</dbReference>
<dbReference type="Pfam" id="PF00919">
    <property type="entry name" value="UPF0004"/>
    <property type="match status" value="1"/>
</dbReference>
<dbReference type="SFLD" id="SFLDF00273">
    <property type="entry name" value="(dimethylallyl)adenosine_tRNA"/>
    <property type="match status" value="1"/>
</dbReference>
<dbReference type="SFLD" id="SFLDG01082">
    <property type="entry name" value="B12-binding_domain_containing"/>
    <property type="match status" value="1"/>
</dbReference>
<dbReference type="SFLD" id="SFLDG01061">
    <property type="entry name" value="methylthiotransferase"/>
    <property type="match status" value="1"/>
</dbReference>
<dbReference type="SMART" id="SM00729">
    <property type="entry name" value="Elp3"/>
    <property type="match status" value="1"/>
</dbReference>
<dbReference type="SUPFAM" id="SSF102114">
    <property type="entry name" value="Radical SAM enzymes"/>
    <property type="match status" value="1"/>
</dbReference>
<dbReference type="PROSITE" id="PS51449">
    <property type="entry name" value="MTTASE_N"/>
    <property type="match status" value="1"/>
</dbReference>
<dbReference type="PROSITE" id="PS01278">
    <property type="entry name" value="MTTASE_RADICAL"/>
    <property type="match status" value="1"/>
</dbReference>
<dbReference type="PROSITE" id="PS51918">
    <property type="entry name" value="RADICAL_SAM"/>
    <property type="match status" value="1"/>
</dbReference>
<dbReference type="PROSITE" id="PS50926">
    <property type="entry name" value="TRAM"/>
    <property type="match status" value="1"/>
</dbReference>
<comment type="function">
    <text evidence="1">Catalyzes the methylthiolation of N6-(dimethylallyl)adenosine (i(6)A), leading to the formation of 2-methylthio-N6-(dimethylallyl)adenosine (ms(2)i(6)A) at position 37 in tRNAs that read codons beginning with uridine.</text>
</comment>
<comment type="catalytic activity">
    <reaction evidence="1">
        <text>N(6)-dimethylallyladenosine(37) in tRNA + (sulfur carrier)-SH + AH2 + 2 S-adenosyl-L-methionine = 2-methylsulfanyl-N(6)-dimethylallyladenosine(37) in tRNA + (sulfur carrier)-H + 5'-deoxyadenosine + L-methionine + A + S-adenosyl-L-homocysteine + 2 H(+)</text>
        <dbReference type="Rhea" id="RHEA:37067"/>
        <dbReference type="Rhea" id="RHEA-COMP:10375"/>
        <dbReference type="Rhea" id="RHEA-COMP:10376"/>
        <dbReference type="Rhea" id="RHEA-COMP:14737"/>
        <dbReference type="Rhea" id="RHEA-COMP:14739"/>
        <dbReference type="ChEBI" id="CHEBI:13193"/>
        <dbReference type="ChEBI" id="CHEBI:15378"/>
        <dbReference type="ChEBI" id="CHEBI:17319"/>
        <dbReference type="ChEBI" id="CHEBI:17499"/>
        <dbReference type="ChEBI" id="CHEBI:29917"/>
        <dbReference type="ChEBI" id="CHEBI:57844"/>
        <dbReference type="ChEBI" id="CHEBI:57856"/>
        <dbReference type="ChEBI" id="CHEBI:59789"/>
        <dbReference type="ChEBI" id="CHEBI:64428"/>
        <dbReference type="ChEBI" id="CHEBI:74415"/>
        <dbReference type="ChEBI" id="CHEBI:74417"/>
        <dbReference type="EC" id="2.8.4.3"/>
    </reaction>
</comment>
<comment type="cofactor">
    <cofactor evidence="1">
        <name>[4Fe-4S] cluster</name>
        <dbReference type="ChEBI" id="CHEBI:49883"/>
    </cofactor>
    <text evidence="1">Binds 2 [4Fe-4S] clusters. One cluster is coordinated with 3 cysteines and an exchangeable S-adenosyl-L-methionine.</text>
</comment>
<comment type="subunit">
    <text evidence="1">Monomer.</text>
</comment>
<comment type="subcellular location">
    <subcellularLocation>
        <location evidence="1">Cytoplasm</location>
    </subcellularLocation>
</comment>
<comment type="similarity">
    <text evidence="1">Belongs to the methylthiotransferase family. MiaB subfamily.</text>
</comment>
<reference key="1">
    <citation type="submission" date="2008-06" db="EMBL/GenBank/DDBJ databases">
        <title>Complete sequence of Stenotrophomonas maltophilia R551-3.</title>
        <authorList>
            <consortium name="US DOE Joint Genome Institute"/>
            <person name="Lucas S."/>
            <person name="Copeland A."/>
            <person name="Lapidus A."/>
            <person name="Glavina del Rio T."/>
            <person name="Dalin E."/>
            <person name="Tice H."/>
            <person name="Pitluck S."/>
            <person name="Chain P."/>
            <person name="Malfatti S."/>
            <person name="Shin M."/>
            <person name="Vergez L."/>
            <person name="Lang D."/>
            <person name="Schmutz J."/>
            <person name="Larimer F."/>
            <person name="Land M."/>
            <person name="Hauser L."/>
            <person name="Kyrpides N."/>
            <person name="Mikhailova N."/>
            <person name="Taghavi S."/>
            <person name="Monchy S."/>
            <person name="Newman L."/>
            <person name="Vangronsveld J."/>
            <person name="van der Lelie D."/>
            <person name="Richardson P."/>
        </authorList>
    </citation>
    <scope>NUCLEOTIDE SEQUENCE [LARGE SCALE GENOMIC DNA]</scope>
    <source>
        <strain>R551-3</strain>
    </source>
</reference>
<sequence length="472" mass="51713">MTGTPDVFPPATPGGTPLVALPAGPRKPDQVKGKLYIKTHGCQMNEYDSAKMADVLAASDGLELTDSPDDADVILVNTCSIREKAQEKVFSQLGVWKSLKNKGREVIIGVGGCVASQEGEAIIKRAPFVDLVFGPQTLHRLPELIRARREQKRPQVDISFPEIEKFDRLPEPRADGASAFVSIMEGCSKYCSFCVVPYTRGTEVSRPFEDVVVEVAQLAAQGVREINLLGQNVNAYRGPYGDGEFADLGLLIRTIAEIDGVGRIRFTTSHPLEFSDSLIDAFRDVPQLANFLHLPVQAGSDRVLSAMKRGYTALEFKSKIRKLRAVRPDISISSDFIVGFPGETDADFEKTMKLIEDIGFDHSFSFIYSRRPGTPAADLEDTISDAEKHARLSRLQERINAHAAGISEKMVGTVQTVLVEGPSRKNPNELTGKTENMRSVNFPAPARLIGQFVDVVITEALTNSLRARVVAE</sequence>
<feature type="chain" id="PRO_0000374583" description="tRNA-2-methylthio-N(6)-dimethylallyladenosine synthase">
    <location>
        <begin position="1"/>
        <end position="472"/>
    </location>
</feature>
<feature type="domain" description="MTTase N-terminal" evidence="1">
    <location>
        <begin position="33"/>
        <end position="150"/>
    </location>
</feature>
<feature type="domain" description="Radical SAM core" evidence="2">
    <location>
        <begin position="173"/>
        <end position="407"/>
    </location>
</feature>
<feature type="domain" description="TRAM" evidence="1">
    <location>
        <begin position="408"/>
        <end position="471"/>
    </location>
</feature>
<feature type="region of interest" description="Disordered" evidence="3">
    <location>
        <begin position="1"/>
        <end position="24"/>
    </location>
</feature>
<feature type="binding site" evidence="1">
    <location>
        <position position="42"/>
    </location>
    <ligand>
        <name>[4Fe-4S] cluster</name>
        <dbReference type="ChEBI" id="CHEBI:49883"/>
        <label>1</label>
    </ligand>
</feature>
<feature type="binding site" evidence="1">
    <location>
        <position position="79"/>
    </location>
    <ligand>
        <name>[4Fe-4S] cluster</name>
        <dbReference type="ChEBI" id="CHEBI:49883"/>
        <label>1</label>
    </ligand>
</feature>
<feature type="binding site" evidence="1">
    <location>
        <position position="113"/>
    </location>
    <ligand>
        <name>[4Fe-4S] cluster</name>
        <dbReference type="ChEBI" id="CHEBI:49883"/>
        <label>1</label>
    </ligand>
</feature>
<feature type="binding site" evidence="1">
    <location>
        <position position="187"/>
    </location>
    <ligand>
        <name>[4Fe-4S] cluster</name>
        <dbReference type="ChEBI" id="CHEBI:49883"/>
        <label>2</label>
        <note>4Fe-4S-S-AdoMet</note>
    </ligand>
</feature>
<feature type="binding site" evidence="1">
    <location>
        <position position="191"/>
    </location>
    <ligand>
        <name>[4Fe-4S] cluster</name>
        <dbReference type="ChEBI" id="CHEBI:49883"/>
        <label>2</label>
        <note>4Fe-4S-S-AdoMet</note>
    </ligand>
</feature>
<feature type="binding site" evidence="1">
    <location>
        <position position="194"/>
    </location>
    <ligand>
        <name>[4Fe-4S] cluster</name>
        <dbReference type="ChEBI" id="CHEBI:49883"/>
        <label>2</label>
        <note>4Fe-4S-S-AdoMet</note>
    </ligand>
</feature>